<keyword id="KW-0030">Aminoacyl-tRNA synthetase</keyword>
<keyword id="KW-0067">ATP-binding</keyword>
<keyword id="KW-0963">Cytoplasm</keyword>
<keyword id="KW-0436">Ligase</keyword>
<keyword id="KW-0547">Nucleotide-binding</keyword>
<keyword id="KW-0648">Protein biosynthesis</keyword>
<protein>
    <recommendedName>
        <fullName evidence="1">Proline--tRNA ligase</fullName>
        <ecNumber evidence="1">6.1.1.15</ecNumber>
    </recommendedName>
    <alternativeName>
        <fullName evidence="1">Prolyl-tRNA synthetase</fullName>
        <shortName evidence="1">ProRS</shortName>
    </alternativeName>
</protein>
<reference key="1">
    <citation type="journal article" date="2005" name="Nat. Biotechnol.">
        <title>Complete genome sequence of the plant commensal Pseudomonas fluorescens Pf-5.</title>
        <authorList>
            <person name="Paulsen I.T."/>
            <person name="Press C.M."/>
            <person name="Ravel J."/>
            <person name="Kobayashi D.Y."/>
            <person name="Myers G.S.A."/>
            <person name="Mavrodi D.V."/>
            <person name="DeBoy R.T."/>
            <person name="Seshadri R."/>
            <person name="Ren Q."/>
            <person name="Madupu R."/>
            <person name="Dodson R.J."/>
            <person name="Durkin A.S."/>
            <person name="Brinkac L.M."/>
            <person name="Daugherty S.C."/>
            <person name="Sullivan S.A."/>
            <person name="Rosovitz M.J."/>
            <person name="Gwinn M.L."/>
            <person name="Zhou L."/>
            <person name="Schneider D.J."/>
            <person name="Cartinhour S.W."/>
            <person name="Nelson W.C."/>
            <person name="Weidman J."/>
            <person name="Watkins K."/>
            <person name="Tran K."/>
            <person name="Khouri H."/>
            <person name="Pierson E.A."/>
            <person name="Pierson L.S. III"/>
            <person name="Thomashow L.S."/>
            <person name="Loper J.E."/>
        </authorList>
    </citation>
    <scope>NUCLEOTIDE SEQUENCE [LARGE SCALE GENOMIC DNA]</scope>
    <source>
        <strain>ATCC BAA-477 / NRRL B-23932 / Pf-5</strain>
    </source>
</reference>
<name>SYP_PSEF5</name>
<sequence>MRTSQYLLATQKETPSDAVVISHQLMLRAGMIRKLASGLYTWLPMGLRVMRKVEAIVREEMNAAGALEVLMPSTQPAELWQESGRWEEYGPELLRFKDRHGRDFCAGPTHEEVITDLARNELSSYKQLPLNLYQIQTKFRDEIRPRFGLMRGREFIMKDAYSFHADQASLQVTYDRMHQAYCNVFTRLGLKFRPVEADNGSIGGAGSHEFHVLAESGEDDIVFSNGSDYAANIEKAEAVPRETSRPAPAEELRLVDTPDTKTIAALVEKFNLPIEKTIKTLIVHAEEPGKLIALIIRGDHELNEIKAANQPGVASPLVMASDAELRDAIGAGAGSLGPLNLPLPIIIDRSVELMSDFGIGANIDDKHYFGVNWERDLPVPTVADLRNVVAGDPSPDGKGTLEIKRGIEVGHIFQLGNKYSKAMKCEVLGENGKPVTLEMGCYGIGVSRVVAAAIEQNNDANGIIWSDTLAPFQIALVPLRYETEQVREATDKLYSELTAAGFEVLLDDRDKKTSPGIKFADMELIGIPHRIVVSDRGLAEGNLEYKSRTEAEAQALPVADVLSFLQARIRR</sequence>
<feature type="chain" id="PRO_0000248745" description="Proline--tRNA ligase">
    <location>
        <begin position="1"/>
        <end position="571"/>
    </location>
</feature>
<gene>
    <name evidence="1" type="primary">proS</name>
    <name type="ordered locus">PFL_1256</name>
</gene>
<accession>Q4KH98</accession>
<organism>
    <name type="scientific">Pseudomonas fluorescens (strain ATCC BAA-477 / NRRL B-23932 / Pf-5)</name>
    <dbReference type="NCBI Taxonomy" id="220664"/>
    <lineage>
        <taxon>Bacteria</taxon>
        <taxon>Pseudomonadati</taxon>
        <taxon>Pseudomonadota</taxon>
        <taxon>Gammaproteobacteria</taxon>
        <taxon>Pseudomonadales</taxon>
        <taxon>Pseudomonadaceae</taxon>
        <taxon>Pseudomonas</taxon>
    </lineage>
</organism>
<comment type="function">
    <text evidence="1">Catalyzes the attachment of proline to tRNA(Pro) in a two-step reaction: proline is first activated by ATP to form Pro-AMP and then transferred to the acceptor end of tRNA(Pro). As ProRS can inadvertently accommodate and process non-cognate amino acids such as alanine and cysteine, to avoid such errors it has two additional distinct editing activities against alanine. One activity is designated as 'pretransfer' editing and involves the tRNA(Pro)-independent hydrolysis of activated Ala-AMP. The other activity is designated 'posttransfer' editing and involves deacylation of mischarged Ala-tRNA(Pro). The misacylated Cys-tRNA(Pro) is not edited by ProRS.</text>
</comment>
<comment type="catalytic activity">
    <reaction evidence="1">
        <text>tRNA(Pro) + L-proline + ATP = L-prolyl-tRNA(Pro) + AMP + diphosphate</text>
        <dbReference type="Rhea" id="RHEA:14305"/>
        <dbReference type="Rhea" id="RHEA-COMP:9700"/>
        <dbReference type="Rhea" id="RHEA-COMP:9702"/>
        <dbReference type="ChEBI" id="CHEBI:30616"/>
        <dbReference type="ChEBI" id="CHEBI:33019"/>
        <dbReference type="ChEBI" id="CHEBI:60039"/>
        <dbReference type="ChEBI" id="CHEBI:78442"/>
        <dbReference type="ChEBI" id="CHEBI:78532"/>
        <dbReference type="ChEBI" id="CHEBI:456215"/>
        <dbReference type="EC" id="6.1.1.15"/>
    </reaction>
</comment>
<comment type="subunit">
    <text evidence="1">Homodimer.</text>
</comment>
<comment type="subcellular location">
    <subcellularLocation>
        <location evidence="1">Cytoplasm</location>
    </subcellularLocation>
</comment>
<comment type="domain">
    <text evidence="1">Consists of three domains: the N-terminal catalytic domain, the editing domain and the C-terminal anticodon-binding domain.</text>
</comment>
<comment type="similarity">
    <text evidence="1">Belongs to the class-II aminoacyl-tRNA synthetase family. ProS type 1 subfamily.</text>
</comment>
<dbReference type="EC" id="6.1.1.15" evidence="1"/>
<dbReference type="EMBL" id="CP000076">
    <property type="protein sequence ID" value="AAY90541.1"/>
    <property type="molecule type" value="Genomic_DNA"/>
</dbReference>
<dbReference type="RefSeq" id="WP_011059600.1">
    <property type="nucleotide sequence ID" value="NC_004129.6"/>
</dbReference>
<dbReference type="SMR" id="Q4KH98"/>
<dbReference type="STRING" id="220664.PFL_1256"/>
<dbReference type="KEGG" id="pfl:PFL_1256"/>
<dbReference type="PATRIC" id="fig|220664.5.peg.1287"/>
<dbReference type="eggNOG" id="COG0442">
    <property type="taxonomic scope" value="Bacteria"/>
</dbReference>
<dbReference type="HOGENOM" id="CLU_016739_0_0_6"/>
<dbReference type="Proteomes" id="UP000008540">
    <property type="component" value="Chromosome"/>
</dbReference>
<dbReference type="GO" id="GO:0005829">
    <property type="term" value="C:cytosol"/>
    <property type="evidence" value="ECO:0007669"/>
    <property type="project" value="TreeGrafter"/>
</dbReference>
<dbReference type="GO" id="GO:0002161">
    <property type="term" value="F:aminoacyl-tRNA deacylase activity"/>
    <property type="evidence" value="ECO:0007669"/>
    <property type="project" value="InterPro"/>
</dbReference>
<dbReference type="GO" id="GO:0005524">
    <property type="term" value="F:ATP binding"/>
    <property type="evidence" value="ECO:0007669"/>
    <property type="project" value="UniProtKB-UniRule"/>
</dbReference>
<dbReference type="GO" id="GO:0004827">
    <property type="term" value="F:proline-tRNA ligase activity"/>
    <property type="evidence" value="ECO:0007669"/>
    <property type="project" value="UniProtKB-UniRule"/>
</dbReference>
<dbReference type="GO" id="GO:0006433">
    <property type="term" value="P:prolyl-tRNA aminoacylation"/>
    <property type="evidence" value="ECO:0007669"/>
    <property type="project" value="UniProtKB-UniRule"/>
</dbReference>
<dbReference type="CDD" id="cd04334">
    <property type="entry name" value="ProRS-INS"/>
    <property type="match status" value="1"/>
</dbReference>
<dbReference type="CDD" id="cd00861">
    <property type="entry name" value="ProRS_anticodon_short"/>
    <property type="match status" value="1"/>
</dbReference>
<dbReference type="CDD" id="cd00779">
    <property type="entry name" value="ProRS_core_prok"/>
    <property type="match status" value="1"/>
</dbReference>
<dbReference type="FunFam" id="3.30.930.10:FF:000043">
    <property type="entry name" value="Proline--tRNA ligase"/>
    <property type="match status" value="1"/>
</dbReference>
<dbReference type="FunFam" id="3.30.930.10:FF:000097">
    <property type="entry name" value="Proline--tRNA ligase"/>
    <property type="match status" value="1"/>
</dbReference>
<dbReference type="FunFam" id="3.90.960.10:FF:000001">
    <property type="entry name" value="Proline--tRNA ligase"/>
    <property type="match status" value="1"/>
</dbReference>
<dbReference type="Gene3D" id="3.40.50.800">
    <property type="entry name" value="Anticodon-binding domain"/>
    <property type="match status" value="1"/>
</dbReference>
<dbReference type="Gene3D" id="3.30.930.10">
    <property type="entry name" value="Bira Bifunctional Protein, Domain 2"/>
    <property type="match status" value="2"/>
</dbReference>
<dbReference type="Gene3D" id="3.90.960.10">
    <property type="entry name" value="YbaK/aminoacyl-tRNA synthetase-associated domain"/>
    <property type="match status" value="1"/>
</dbReference>
<dbReference type="HAMAP" id="MF_01569">
    <property type="entry name" value="Pro_tRNA_synth_type1"/>
    <property type="match status" value="1"/>
</dbReference>
<dbReference type="InterPro" id="IPR002314">
    <property type="entry name" value="aa-tRNA-synt_IIb"/>
</dbReference>
<dbReference type="InterPro" id="IPR006195">
    <property type="entry name" value="aa-tRNA-synth_II"/>
</dbReference>
<dbReference type="InterPro" id="IPR045864">
    <property type="entry name" value="aa-tRNA-synth_II/BPL/LPL"/>
</dbReference>
<dbReference type="InterPro" id="IPR004154">
    <property type="entry name" value="Anticodon-bd"/>
</dbReference>
<dbReference type="InterPro" id="IPR036621">
    <property type="entry name" value="Anticodon-bd_dom_sf"/>
</dbReference>
<dbReference type="InterPro" id="IPR002316">
    <property type="entry name" value="Pro-tRNA-ligase_IIa"/>
</dbReference>
<dbReference type="InterPro" id="IPR004500">
    <property type="entry name" value="Pro-tRNA-synth_IIa_bac-type"/>
</dbReference>
<dbReference type="InterPro" id="IPR023717">
    <property type="entry name" value="Pro-tRNA-Synthase_IIa_type1"/>
</dbReference>
<dbReference type="InterPro" id="IPR050062">
    <property type="entry name" value="Pro-tRNA_synthetase"/>
</dbReference>
<dbReference type="InterPro" id="IPR044140">
    <property type="entry name" value="ProRS_anticodon_short"/>
</dbReference>
<dbReference type="InterPro" id="IPR033730">
    <property type="entry name" value="ProRS_core_prok"/>
</dbReference>
<dbReference type="InterPro" id="IPR036754">
    <property type="entry name" value="YbaK/aa-tRNA-synt-asso_dom_sf"/>
</dbReference>
<dbReference type="InterPro" id="IPR007214">
    <property type="entry name" value="YbaK/aa-tRNA-synth-assoc-dom"/>
</dbReference>
<dbReference type="NCBIfam" id="NF006625">
    <property type="entry name" value="PRK09194.1"/>
    <property type="match status" value="1"/>
</dbReference>
<dbReference type="NCBIfam" id="TIGR00409">
    <property type="entry name" value="proS_fam_II"/>
    <property type="match status" value="1"/>
</dbReference>
<dbReference type="PANTHER" id="PTHR42753">
    <property type="entry name" value="MITOCHONDRIAL RIBOSOME PROTEIN L39/PROLYL-TRNA LIGASE FAMILY MEMBER"/>
    <property type="match status" value="1"/>
</dbReference>
<dbReference type="PANTHER" id="PTHR42753:SF2">
    <property type="entry name" value="PROLINE--TRNA LIGASE"/>
    <property type="match status" value="1"/>
</dbReference>
<dbReference type="Pfam" id="PF03129">
    <property type="entry name" value="HGTP_anticodon"/>
    <property type="match status" value="1"/>
</dbReference>
<dbReference type="Pfam" id="PF00587">
    <property type="entry name" value="tRNA-synt_2b"/>
    <property type="match status" value="1"/>
</dbReference>
<dbReference type="Pfam" id="PF04073">
    <property type="entry name" value="tRNA_edit"/>
    <property type="match status" value="1"/>
</dbReference>
<dbReference type="PIRSF" id="PIRSF001535">
    <property type="entry name" value="ProRS_1"/>
    <property type="match status" value="1"/>
</dbReference>
<dbReference type="PRINTS" id="PR01046">
    <property type="entry name" value="TRNASYNTHPRO"/>
</dbReference>
<dbReference type="SUPFAM" id="SSF52954">
    <property type="entry name" value="Class II aaRS ABD-related"/>
    <property type="match status" value="1"/>
</dbReference>
<dbReference type="SUPFAM" id="SSF55681">
    <property type="entry name" value="Class II aaRS and biotin synthetases"/>
    <property type="match status" value="1"/>
</dbReference>
<dbReference type="SUPFAM" id="SSF55826">
    <property type="entry name" value="YbaK/ProRS associated domain"/>
    <property type="match status" value="1"/>
</dbReference>
<dbReference type="PROSITE" id="PS50862">
    <property type="entry name" value="AA_TRNA_LIGASE_II"/>
    <property type="match status" value="1"/>
</dbReference>
<evidence type="ECO:0000255" key="1">
    <source>
        <dbReference type="HAMAP-Rule" id="MF_01569"/>
    </source>
</evidence>
<proteinExistence type="inferred from homology"/>